<reference key="1">
    <citation type="submission" date="2008-04" db="EMBL/GenBank/DDBJ databases">
        <title>Complete sequence of Yersinia pseudotuberculosis PB1/+.</title>
        <authorList>
            <person name="Copeland A."/>
            <person name="Lucas S."/>
            <person name="Lapidus A."/>
            <person name="Glavina del Rio T."/>
            <person name="Dalin E."/>
            <person name="Tice H."/>
            <person name="Bruce D."/>
            <person name="Goodwin L."/>
            <person name="Pitluck S."/>
            <person name="Munk A.C."/>
            <person name="Brettin T."/>
            <person name="Detter J.C."/>
            <person name="Han C."/>
            <person name="Tapia R."/>
            <person name="Schmutz J."/>
            <person name="Larimer F."/>
            <person name="Land M."/>
            <person name="Hauser L."/>
            <person name="Challacombe J.F."/>
            <person name="Green L."/>
            <person name="Lindler L.E."/>
            <person name="Nikolich M.P."/>
            <person name="Richardson P."/>
        </authorList>
    </citation>
    <scope>NUCLEOTIDE SEQUENCE [LARGE SCALE GENOMIC DNA]</scope>
    <source>
        <strain>PB1/+</strain>
    </source>
</reference>
<accession>B2K5V7</accession>
<dbReference type="EC" id="3.1.1.85" evidence="2"/>
<dbReference type="EMBL" id="CP001048">
    <property type="protein sequence ID" value="ACC90916.1"/>
    <property type="molecule type" value="Genomic_DNA"/>
</dbReference>
<dbReference type="RefSeq" id="WP_011193243.1">
    <property type="nucleotide sequence ID" value="NZ_CP009780.1"/>
</dbReference>
<dbReference type="SMR" id="B2K5V7"/>
<dbReference type="ESTHER" id="yerpe-BIOH">
    <property type="family name" value="BioH"/>
</dbReference>
<dbReference type="GeneID" id="49784234"/>
<dbReference type="KEGG" id="ypb:YPTS_3967"/>
<dbReference type="PATRIC" id="fig|502801.10.peg.3432"/>
<dbReference type="UniPathway" id="UPA00078"/>
<dbReference type="GO" id="GO:0005737">
    <property type="term" value="C:cytoplasm"/>
    <property type="evidence" value="ECO:0007669"/>
    <property type="project" value="UniProtKB-SubCell"/>
</dbReference>
<dbReference type="GO" id="GO:0090499">
    <property type="term" value="F:pimelyl-[acyl-carrier protein] methyl ester esterase activity"/>
    <property type="evidence" value="ECO:0007669"/>
    <property type="project" value="UniProtKB-EC"/>
</dbReference>
<dbReference type="GO" id="GO:0009102">
    <property type="term" value="P:biotin biosynthetic process"/>
    <property type="evidence" value="ECO:0007669"/>
    <property type="project" value="UniProtKB-UniRule"/>
</dbReference>
<dbReference type="Gene3D" id="3.40.50.1820">
    <property type="entry name" value="alpha/beta hydrolase"/>
    <property type="match status" value="1"/>
</dbReference>
<dbReference type="HAMAP" id="MF_01260">
    <property type="entry name" value="Carboxylester"/>
    <property type="match status" value="1"/>
</dbReference>
<dbReference type="InterPro" id="IPR000073">
    <property type="entry name" value="AB_hydrolase_1"/>
</dbReference>
<dbReference type="InterPro" id="IPR029058">
    <property type="entry name" value="AB_hydrolase_fold"/>
</dbReference>
<dbReference type="InterPro" id="IPR010076">
    <property type="entry name" value="BioH"/>
</dbReference>
<dbReference type="InterPro" id="IPR050228">
    <property type="entry name" value="Carboxylesterase_BioH"/>
</dbReference>
<dbReference type="NCBIfam" id="TIGR01738">
    <property type="entry name" value="bioH"/>
    <property type="match status" value="1"/>
</dbReference>
<dbReference type="PANTHER" id="PTHR43194">
    <property type="entry name" value="HYDROLASE ALPHA/BETA FOLD FAMILY"/>
    <property type="match status" value="1"/>
</dbReference>
<dbReference type="PANTHER" id="PTHR43194:SF5">
    <property type="entry name" value="PIMELOYL-[ACYL-CARRIER PROTEIN] METHYL ESTER ESTERASE"/>
    <property type="match status" value="1"/>
</dbReference>
<dbReference type="Pfam" id="PF00561">
    <property type="entry name" value="Abhydrolase_1"/>
    <property type="match status" value="1"/>
</dbReference>
<dbReference type="SUPFAM" id="SSF53474">
    <property type="entry name" value="alpha/beta-Hydrolases"/>
    <property type="match status" value="1"/>
</dbReference>
<protein>
    <recommendedName>
        <fullName evidence="2">Pimeloyl-[acyl-carrier protein] methyl ester esterase</fullName>
        <ecNumber evidence="2">3.1.1.85</ecNumber>
    </recommendedName>
    <alternativeName>
        <fullName evidence="2">Biotin synthesis protein BioH</fullName>
    </alternativeName>
    <alternativeName>
        <fullName evidence="2">Carboxylesterase BioH</fullName>
    </alternativeName>
</protein>
<proteinExistence type="inferred from homology"/>
<feature type="chain" id="PRO_1000140012" description="Pimeloyl-[acyl-carrier protein] methyl ester esterase">
    <location>
        <begin position="1"/>
        <end position="258"/>
    </location>
</feature>
<feature type="domain" description="AB hydrolase-1" evidence="1">
    <location>
        <begin position="16"/>
        <end position="242"/>
    </location>
</feature>
<feature type="active site" description="Nucleophile" evidence="2">
    <location>
        <position position="82"/>
    </location>
</feature>
<feature type="active site" evidence="2">
    <location>
        <position position="207"/>
    </location>
</feature>
<feature type="active site" evidence="2">
    <location>
        <position position="235"/>
    </location>
</feature>
<feature type="binding site" evidence="2">
    <location>
        <position position="22"/>
    </location>
    <ligand>
        <name>substrate</name>
    </ligand>
</feature>
<feature type="binding site" evidence="2">
    <location>
        <begin position="82"/>
        <end position="83"/>
    </location>
    <ligand>
        <name>substrate</name>
    </ligand>
</feature>
<feature type="binding site" evidence="2">
    <location>
        <begin position="143"/>
        <end position="147"/>
    </location>
    <ligand>
        <name>substrate</name>
    </ligand>
</feature>
<feature type="binding site" evidence="2">
    <location>
        <position position="235"/>
    </location>
    <ligand>
        <name>substrate</name>
    </ligand>
</feature>
<organism>
    <name type="scientific">Yersinia pseudotuberculosis serotype IB (strain PB1/+)</name>
    <dbReference type="NCBI Taxonomy" id="502801"/>
    <lineage>
        <taxon>Bacteria</taxon>
        <taxon>Pseudomonadati</taxon>
        <taxon>Pseudomonadota</taxon>
        <taxon>Gammaproteobacteria</taxon>
        <taxon>Enterobacterales</taxon>
        <taxon>Yersiniaceae</taxon>
        <taxon>Yersinia</taxon>
    </lineage>
</organism>
<name>BIOH_YERPB</name>
<keyword id="KW-0093">Biotin biosynthesis</keyword>
<keyword id="KW-0963">Cytoplasm</keyword>
<keyword id="KW-0378">Hydrolase</keyword>
<keyword id="KW-0719">Serine esterase</keyword>
<sequence>MKQLYWYTCGEGDCDLVLLHGWGLNSGVWHCIIDRLAPHFRLHLVDLPGYGRSQDYGAMSLADMAERVAQQAPKQALWLGWSMGGLVASQIALSQPECVRGLITVSSSPCFTARDEWPGIKPEVLAGFQHQLSDDFHRTVERFLALQTLGTESSRQDARLLKSVVLQHQMPDVEVLTGGLEILRTADLRTALSGFTLPFMRVYGHLDSLVPRKVASLLDSAWPQTQSVVMQGAAHAPFISHPNDFAKLILNFAEENKK</sequence>
<evidence type="ECO:0000255" key="1"/>
<evidence type="ECO:0000255" key="2">
    <source>
        <dbReference type="HAMAP-Rule" id="MF_01260"/>
    </source>
</evidence>
<gene>
    <name evidence="2" type="primary">bioH</name>
    <name type="ordered locus">YPTS_3967</name>
</gene>
<comment type="function">
    <text evidence="2">The physiological role of BioH is to remove the methyl group introduced by BioC when the pimeloyl moiety is complete. It allows to synthesize pimeloyl-ACP via the fatty acid synthetic pathway through the hydrolysis of the ester bonds of pimeloyl-ACP esters.</text>
</comment>
<comment type="catalytic activity">
    <reaction evidence="2">
        <text>6-carboxyhexanoyl-[ACP] methyl ester + H2O = 6-carboxyhexanoyl-[ACP] + methanol + H(+)</text>
        <dbReference type="Rhea" id="RHEA:42700"/>
        <dbReference type="Rhea" id="RHEA-COMP:9955"/>
        <dbReference type="Rhea" id="RHEA-COMP:10186"/>
        <dbReference type="ChEBI" id="CHEBI:15377"/>
        <dbReference type="ChEBI" id="CHEBI:15378"/>
        <dbReference type="ChEBI" id="CHEBI:17790"/>
        <dbReference type="ChEBI" id="CHEBI:78846"/>
        <dbReference type="ChEBI" id="CHEBI:82735"/>
        <dbReference type="EC" id="3.1.1.85"/>
    </reaction>
</comment>
<comment type="pathway">
    <text evidence="2">Cofactor biosynthesis; biotin biosynthesis.</text>
</comment>
<comment type="subunit">
    <text evidence="2">Monomer.</text>
</comment>
<comment type="subcellular location">
    <subcellularLocation>
        <location evidence="2">Cytoplasm</location>
    </subcellularLocation>
</comment>
<comment type="similarity">
    <text evidence="2">Belongs to the AB hydrolase superfamily. Carboxylesterase BioH family.</text>
</comment>